<proteinExistence type="inferred from homology"/>
<gene>
    <name evidence="1" type="primary">atpB</name>
</gene>
<keyword id="KW-0066">ATP synthesis</keyword>
<keyword id="KW-0067">ATP-binding</keyword>
<keyword id="KW-0139">CF(1)</keyword>
<keyword id="KW-0150">Chloroplast</keyword>
<keyword id="KW-0375">Hydrogen ion transport</keyword>
<keyword id="KW-0406">Ion transport</keyword>
<keyword id="KW-0472">Membrane</keyword>
<keyword id="KW-0547">Nucleotide-binding</keyword>
<keyword id="KW-0934">Plastid</keyword>
<keyword id="KW-0793">Thylakoid</keyword>
<keyword id="KW-1278">Translocase</keyword>
<keyword id="KW-0813">Transport</keyword>
<evidence type="ECO:0000255" key="1">
    <source>
        <dbReference type="HAMAP-Rule" id="MF_01347"/>
    </source>
</evidence>
<geneLocation type="chloroplast"/>
<sequence length="471" mass="51060">MVNTATNTGFITQIIGPVIDIEFPNGKLPPIYNSVIVSDVTCEVQQLLGNNRVRAVSMTSTDGLKRGMEVTDLNAPISVPVGKSTLGRIFNVLGVPVDEMGEVSMETTLPIHRLSPRFTELETKPSIFETGIKVVDLLAPYRRGGKIGLFGGAGVGKTVLIMELINNIAKAHGGVSVFGGVGERTREGNDLYMEMKESGVINASNLSESKVALVYGQMNEPPGARMRVGLTALTMAEYFRDVNKQDVLLFIDNIFRFVQAGSEVSALLGRMPSAVGYQPTLATEMGTLQERITSTREGSITSIQAVYVPADDLTDPAPATTFSHLDATTVLSRNLAAKGIYPAVDPLDSTSTMLQINIVGSEHYDTAQDVKETLQRYKELQDIIAILGLDELSEEDRLTVARARKVERFLSQPFFVAEVFTGSPGKYVSLADTIKGFNMILNGELDELPEQAFYLVGNIDEAIEKANSLKG</sequence>
<name>ATPB_RHDSA</name>
<protein>
    <recommendedName>
        <fullName evidence="1">ATP synthase subunit beta, chloroplastic</fullName>
        <ecNumber evidence="1">7.1.2.2</ecNumber>
    </recommendedName>
    <alternativeName>
        <fullName evidence="1">ATP synthase F1 sector subunit beta</fullName>
    </alternativeName>
    <alternativeName>
        <fullName evidence="1">F-ATPase subunit beta</fullName>
    </alternativeName>
</protein>
<reference key="1">
    <citation type="journal article" date="2007" name="Mol. Biol. Evol.">
        <title>Plastid genome sequence of the cryptophyte alga Rhodomonas salina CCMP1319: lateral transfer of putative DNA replication machinery and a test of chromist plastid phylogeny.</title>
        <authorList>
            <person name="Khan H."/>
            <person name="Parks N."/>
            <person name="Kozera C."/>
            <person name="Curtis B.A."/>
            <person name="Parsons B.J."/>
            <person name="Bowman S."/>
            <person name="Archibald J.M."/>
        </authorList>
    </citation>
    <scope>NUCLEOTIDE SEQUENCE [LARGE SCALE GENOMIC DNA]</scope>
    <source>
        <strain>CCMP1319 / NEPCC76 / CS-174</strain>
    </source>
</reference>
<organism>
    <name type="scientific">Rhodomonas salina</name>
    <name type="common">Cryptomonas salina</name>
    <dbReference type="NCBI Taxonomy" id="52970"/>
    <lineage>
        <taxon>Eukaryota</taxon>
        <taxon>Cryptophyceae</taxon>
        <taxon>Pyrenomonadales</taxon>
        <taxon>Pyrenomonadaceae</taxon>
        <taxon>Rhodomonas</taxon>
    </lineage>
</organism>
<accession>A6MVY0</accession>
<dbReference type="EC" id="7.1.2.2" evidence="1"/>
<dbReference type="EMBL" id="EF508371">
    <property type="protein sequence ID" value="ABO70751.1"/>
    <property type="molecule type" value="Genomic_DNA"/>
</dbReference>
<dbReference type="RefSeq" id="YP_001293559.1">
    <property type="nucleotide sequence ID" value="NC_009573.1"/>
</dbReference>
<dbReference type="SMR" id="A6MVY0"/>
<dbReference type="GeneID" id="5228594"/>
<dbReference type="GO" id="GO:0009535">
    <property type="term" value="C:chloroplast thylakoid membrane"/>
    <property type="evidence" value="ECO:0007669"/>
    <property type="project" value="UniProtKB-SubCell"/>
</dbReference>
<dbReference type="GO" id="GO:0005739">
    <property type="term" value="C:mitochondrion"/>
    <property type="evidence" value="ECO:0007669"/>
    <property type="project" value="GOC"/>
</dbReference>
<dbReference type="GO" id="GO:0045259">
    <property type="term" value="C:proton-transporting ATP synthase complex"/>
    <property type="evidence" value="ECO:0007669"/>
    <property type="project" value="UniProtKB-KW"/>
</dbReference>
<dbReference type="GO" id="GO:0005524">
    <property type="term" value="F:ATP binding"/>
    <property type="evidence" value="ECO:0007669"/>
    <property type="project" value="UniProtKB-UniRule"/>
</dbReference>
<dbReference type="GO" id="GO:0016887">
    <property type="term" value="F:ATP hydrolysis activity"/>
    <property type="evidence" value="ECO:0007669"/>
    <property type="project" value="InterPro"/>
</dbReference>
<dbReference type="GO" id="GO:0046933">
    <property type="term" value="F:proton-transporting ATP synthase activity, rotational mechanism"/>
    <property type="evidence" value="ECO:0007669"/>
    <property type="project" value="UniProtKB-UniRule"/>
</dbReference>
<dbReference type="GO" id="GO:0042776">
    <property type="term" value="P:proton motive force-driven mitochondrial ATP synthesis"/>
    <property type="evidence" value="ECO:0007669"/>
    <property type="project" value="TreeGrafter"/>
</dbReference>
<dbReference type="CDD" id="cd18110">
    <property type="entry name" value="ATP-synt_F1_beta_C"/>
    <property type="match status" value="1"/>
</dbReference>
<dbReference type="CDD" id="cd18115">
    <property type="entry name" value="ATP-synt_F1_beta_N"/>
    <property type="match status" value="1"/>
</dbReference>
<dbReference type="CDD" id="cd01133">
    <property type="entry name" value="F1-ATPase_beta_CD"/>
    <property type="match status" value="1"/>
</dbReference>
<dbReference type="FunFam" id="1.10.1140.10:FF:000001">
    <property type="entry name" value="ATP synthase subunit beta"/>
    <property type="match status" value="1"/>
</dbReference>
<dbReference type="FunFam" id="3.40.50.300:FF:000004">
    <property type="entry name" value="ATP synthase subunit beta"/>
    <property type="match status" value="1"/>
</dbReference>
<dbReference type="Gene3D" id="2.40.10.170">
    <property type="match status" value="1"/>
</dbReference>
<dbReference type="Gene3D" id="1.10.1140.10">
    <property type="entry name" value="Bovine Mitochondrial F1-atpase, Atp Synthase Beta Chain, Chain D, domain 3"/>
    <property type="match status" value="1"/>
</dbReference>
<dbReference type="Gene3D" id="3.40.50.300">
    <property type="entry name" value="P-loop containing nucleotide triphosphate hydrolases"/>
    <property type="match status" value="1"/>
</dbReference>
<dbReference type="HAMAP" id="MF_01347">
    <property type="entry name" value="ATP_synth_beta_bact"/>
    <property type="match status" value="1"/>
</dbReference>
<dbReference type="InterPro" id="IPR003593">
    <property type="entry name" value="AAA+_ATPase"/>
</dbReference>
<dbReference type="InterPro" id="IPR055190">
    <property type="entry name" value="ATP-synt_VA_C"/>
</dbReference>
<dbReference type="InterPro" id="IPR005722">
    <property type="entry name" value="ATP_synth_F1_bsu"/>
</dbReference>
<dbReference type="InterPro" id="IPR020003">
    <property type="entry name" value="ATPase_a/bsu_AS"/>
</dbReference>
<dbReference type="InterPro" id="IPR050053">
    <property type="entry name" value="ATPase_alpha/beta_chains"/>
</dbReference>
<dbReference type="InterPro" id="IPR004100">
    <property type="entry name" value="ATPase_F1/V1/A1_a/bsu_N"/>
</dbReference>
<dbReference type="InterPro" id="IPR036121">
    <property type="entry name" value="ATPase_F1/V1/A1_a/bsu_N_sf"/>
</dbReference>
<dbReference type="InterPro" id="IPR000194">
    <property type="entry name" value="ATPase_F1/V1/A1_a/bsu_nucl-bd"/>
</dbReference>
<dbReference type="InterPro" id="IPR024034">
    <property type="entry name" value="ATPase_F1/V1_b/a_C"/>
</dbReference>
<dbReference type="InterPro" id="IPR027417">
    <property type="entry name" value="P-loop_NTPase"/>
</dbReference>
<dbReference type="NCBIfam" id="TIGR01039">
    <property type="entry name" value="atpD"/>
    <property type="match status" value="1"/>
</dbReference>
<dbReference type="PANTHER" id="PTHR15184">
    <property type="entry name" value="ATP SYNTHASE"/>
    <property type="match status" value="1"/>
</dbReference>
<dbReference type="PANTHER" id="PTHR15184:SF71">
    <property type="entry name" value="ATP SYNTHASE SUBUNIT BETA, MITOCHONDRIAL"/>
    <property type="match status" value="1"/>
</dbReference>
<dbReference type="Pfam" id="PF00006">
    <property type="entry name" value="ATP-synt_ab"/>
    <property type="match status" value="1"/>
</dbReference>
<dbReference type="Pfam" id="PF02874">
    <property type="entry name" value="ATP-synt_ab_N"/>
    <property type="match status" value="1"/>
</dbReference>
<dbReference type="Pfam" id="PF22919">
    <property type="entry name" value="ATP-synt_VA_C"/>
    <property type="match status" value="1"/>
</dbReference>
<dbReference type="SMART" id="SM00382">
    <property type="entry name" value="AAA"/>
    <property type="match status" value="1"/>
</dbReference>
<dbReference type="SUPFAM" id="SSF47917">
    <property type="entry name" value="C-terminal domain of alpha and beta subunits of F1 ATP synthase"/>
    <property type="match status" value="1"/>
</dbReference>
<dbReference type="SUPFAM" id="SSF50615">
    <property type="entry name" value="N-terminal domain of alpha and beta subunits of F1 ATP synthase"/>
    <property type="match status" value="1"/>
</dbReference>
<dbReference type="SUPFAM" id="SSF52540">
    <property type="entry name" value="P-loop containing nucleoside triphosphate hydrolases"/>
    <property type="match status" value="1"/>
</dbReference>
<dbReference type="PROSITE" id="PS00152">
    <property type="entry name" value="ATPASE_ALPHA_BETA"/>
    <property type="match status" value="1"/>
</dbReference>
<feature type="chain" id="PRO_0000339639" description="ATP synthase subunit beta, chloroplastic">
    <location>
        <begin position="1"/>
        <end position="471"/>
    </location>
</feature>
<feature type="binding site" evidence="1">
    <location>
        <begin position="151"/>
        <end position="158"/>
    </location>
    <ligand>
        <name>ATP</name>
        <dbReference type="ChEBI" id="CHEBI:30616"/>
    </ligand>
</feature>
<comment type="function">
    <text evidence="1">Produces ATP from ADP in the presence of a proton gradient across the membrane. The catalytic sites are hosted primarily by the beta subunits.</text>
</comment>
<comment type="catalytic activity">
    <reaction evidence="1">
        <text>ATP + H2O + 4 H(+)(in) = ADP + phosphate + 5 H(+)(out)</text>
        <dbReference type="Rhea" id="RHEA:57720"/>
        <dbReference type="ChEBI" id="CHEBI:15377"/>
        <dbReference type="ChEBI" id="CHEBI:15378"/>
        <dbReference type="ChEBI" id="CHEBI:30616"/>
        <dbReference type="ChEBI" id="CHEBI:43474"/>
        <dbReference type="ChEBI" id="CHEBI:456216"/>
        <dbReference type="EC" id="7.1.2.2"/>
    </reaction>
</comment>
<comment type="subunit">
    <text evidence="1">F-type ATPases have 2 components, CF(1) - the catalytic core - and CF(0) - the membrane proton channel. CF(1) has five subunits: alpha(3), beta(3), gamma(1), delta(1), epsilon(1). CF(0) has four main subunits: a(1), b(1), b'(1) and c(9-12).</text>
</comment>
<comment type="subcellular location">
    <subcellularLocation>
        <location evidence="1">Plastid</location>
        <location evidence="1">Chloroplast thylakoid membrane</location>
        <topology evidence="1">Peripheral membrane protein</topology>
    </subcellularLocation>
</comment>
<comment type="similarity">
    <text evidence="1">Belongs to the ATPase alpha/beta chains family.</text>
</comment>